<organism>
    <name type="scientific">Ehrlichia canis (strain Jake)</name>
    <dbReference type="NCBI Taxonomy" id="269484"/>
    <lineage>
        <taxon>Bacteria</taxon>
        <taxon>Pseudomonadati</taxon>
        <taxon>Pseudomonadota</taxon>
        <taxon>Alphaproteobacteria</taxon>
        <taxon>Rickettsiales</taxon>
        <taxon>Anaplasmataceae</taxon>
        <taxon>Ehrlichia</taxon>
    </lineage>
</organism>
<comment type="function">
    <text evidence="1">Binds directly to 16S ribosomal RNA.</text>
</comment>
<comment type="similarity">
    <text evidence="1">Belongs to the bacterial ribosomal protein bS20 family.</text>
</comment>
<evidence type="ECO:0000255" key="1">
    <source>
        <dbReference type="HAMAP-Rule" id="MF_00500"/>
    </source>
</evidence>
<evidence type="ECO:0000305" key="2"/>
<sequence length="95" mass="10987">MANHPSAKKMIKVIKKRTMVNRMRKSRAHNYVKKFLLALAAGNKELMVETFKKAESNLHKCVNKKIIHRNTAARKISRMALKLKTFDLQQQAKAL</sequence>
<protein>
    <recommendedName>
        <fullName evidence="1">Small ribosomal subunit protein bS20</fullName>
    </recommendedName>
    <alternativeName>
        <fullName evidence="2">30S ribosomal protein S20</fullName>
    </alternativeName>
</protein>
<reference key="1">
    <citation type="journal article" date="2006" name="J. Bacteriol.">
        <title>The genome of the obligately intracellular bacterium Ehrlichia canis reveals themes of complex membrane structure and immune evasion strategies.</title>
        <authorList>
            <person name="Mavromatis K."/>
            <person name="Doyle C.K."/>
            <person name="Lykidis A."/>
            <person name="Ivanova N."/>
            <person name="Francino M.P."/>
            <person name="Chain P."/>
            <person name="Shin M."/>
            <person name="Malfatti S."/>
            <person name="Larimer F."/>
            <person name="Copeland A."/>
            <person name="Detter J.C."/>
            <person name="Land M."/>
            <person name="Richardson P.M."/>
            <person name="Yu X.J."/>
            <person name="Walker D.H."/>
            <person name="McBride J.W."/>
            <person name="Kyrpides N.C."/>
        </authorList>
    </citation>
    <scope>NUCLEOTIDE SEQUENCE [LARGE SCALE GENOMIC DNA]</scope>
    <source>
        <strain>Jake</strain>
    </source>
</reference>
<feature type="chain" id="PRO_0000224966" description="Small ribosomal subunit protein bS20">
    <location>
        <begin position="1"/>
        <end position="95"/>
    </location>
</feature>
<proteinExistence type="inferred from homology"/>
<dbReference type="EMBL" id="CP000107">
    <property type="protein sequence ID" value="AAZ68092.1"/>
    <property type="molecule type" value="Genomic_DNA"/>
</dbReference>
<dbReference type="RefSeq" id="WP_011304170.1">
    <property type="nucleotide sequence ID" value="NC_007354.1"/>
</dbReference>
<dbReference type="SMR" id="Q3YT63"/>
<dbReference type="STRING" id="269484.Ecaj_0041"/>
<dbReference type="KEGG" id="ecn:Ecaj_0041"/>
<dbReference type="eggNOG" id="COG0268">
    <property type="taxonomic scope" value="Bacteria"/>
</dbReference>
<dbReference type="HOGENOM" id="CLU_160655_3_0_5"/>
<dbReference type="InParanoid" id="Q3YT63"/>
<dbReference type="Proteomes" id="UP000000435">
    <property type="component" value="Chromosome"/>
</dbReference>
<dbReference type="GO" id="GO:0015935">
    <property type="term" value="C:small ribosomal subunit"/>
    <property type="evidence" value="ECO:0007669"/>
    <property type="project" value="TreeGrafter"/>
</dbReference>
<dbReference type="GO" id="GO:0070181">
    <property type="term" value="F:small ribosomal subunit rRNA binding"/>
    <property type="evidence" value="ECO:0007669"/>
    <property type="project" value="TreeGrafter"/>
</dbReference>
<dbReference type="GO" id="GO:0003735">
    <property type="term" value="F:structural constituent of ribosome"/>
    <property type="evidence" value="ECO:0007669"/>
    <property type="project" value="InterPro"/>
</dbReference>
<dbReference type="GO" id="GO:0006412">
    <property type="term" value="P:translation"/>
    <property type="evidence" value="ECO:0007669"/>
    <property type="project" value="UniProtKB-UniRule"/>
</dbReference>
<dbReference type="Gene3D" id="1.20.58.110">
    <property type="entry name" value="Ribosomal protein S20"/>
    <property type="match status" value="1"/>
</dbReference>
<dbReference type="HAMAP" id="MF_00500">
    <property type="entry name" value="Ribosomal_bS20"/>
    <property type="match status" value="1"/>
</dbReference>
<dbReference type="InterPro" id="IPR002583">
    <property type="entry name" value="Ribosomal_bS20"/>
</dbReference>
<dbReference type="InterPro" id="IPR036510">
    <property type="entry name" value="Ribosomal_bS20_sf"/>
</dbReference>
<dbReference type="NCBIfam" id="TIGR00029">
    <property type="entry name" value="S20"/>
    <property type="match status" value="1"/>
</dbReference>
<dbReference type="PANTHER" id="PTHR33398">
    <property type="entry name" value="30S RIBOSOMAL PROTEIN S20"/>
    <property type="match status" value="1"/>
</dbReference>
<dbReference type="PANTHER" id="PTHR33398:SF1">
    <property type="entry name" value="SMALL RIBOSOMAL SUBUNIT PROTEIN BS20C"/>
    <property type="match status" value="1"/>
</dbReference>
<dbReference type="Pfam" id="PF01649">
    <property type="entry name" value="Ribosomal_S20p"/>
    <property type="match status" value="1"/>
</dbReference>
<dbReference type="SUPFAM" id="SSF46992">
    <property type="entry name" value="Ribosomal protein S20"/>
    <property type="match status" value="1"/>
</dbReference>
<keyword id="KW-0687">Ribonucleoprotein</keyword>
<keyword id="KW-0689">Ribosomal protein</keyword>
<keyword id="KW-0694">RNA-binding</keyword>
<keyword id="KW-0699">rRNA-binding</keyword>
<name>RS20_EHRCJ</name>
<accession>Q3YT63</accession>
<gene>
    <name evidence="1" type="primary">rpsT</name>
    <name type="ordered locus">Ecaj_0041</name>
</gene>